<proteinExistence type="inferred from homology"/>
<sequence length="408" mass="41469">MDFGVLPPEINSGRMYAGPGSGPMMAAAAAWDSLAAELGLAAGGYRLAISELTGAYWAGPAAASMVAAVTPYVAWLSATAGQAEQAGMQARAAAAAYELAFAMTVPPPVVVANRALLVALVATNFFGQNTPAIAATEAQYAEMWAQDAAAMYAYAGSAAIATELTPFTAAPVTTSPAALAGQAAATVSSTVPPLATTAAVPQLLQQLSSTSLIPWYSALQQWLAENLLGLTPDNRMTIVRLLGISYFDEGLLQFEASLAQQAIPGTPGGAGDSGSSVLDSWGPTIFAGPRASPSVAGGGAVGGVQTPQPYWYWALDRESIGGSVSAALGKGSSAGSLSVPPDWAARARWANPAAWRLPGDDVTALRGTAENALLRGFPMASAGQSTGGGFVHKYGFRLAVMQRPPFAG</sequence>
<organism>
    <name type="scientific">Mycobacterium tuberculosis (strain CDC 1551 / Oshkosh)</name>
    <dbReference type="NCBI Taxonomy" id="83331"/>
    <lineage>
        <taxon>Bacteria</taxon>
        <taxon>Bacillati</taxon>
        <taxon>Actinomycetota</taxon>
        <taxon>Actinomycetes</taxon>
        <taxon>Mycobacteriales</taxon>
        <taxon>Mycobacteriaceae</taxon>
        <taxon>Mycobacterium</taxon>
        <taxon>Mycobacterium tuberculosis complex</taxon>
    </lineage>
</organism>
<name>PPE45_MYCTO</name>
<comment type="subcellular location">
    <subcellularLocation>
        <location evidence="2">Cell membrane</location>
        <topology evidence="2">Single-pass membrane protein</topology>
    </subcellularLocation>
</comment>
<comment type="similarity">
    <text evidence="2">Belongs to the mycobacterial PPE family.</text>
</comment>
<reference key="1">
    <citation type="journal article" date="2002" name="J. Bacteriol.">
        <title>Whole-genome comparison of Mycobacterium tuberculosis clinical and laboratory strains.</title>
        <authorList>
            <person name="Fleischmann R.D."/>
            <person name="Alland D."/>
            <person name="Eisen J.A."/>
            <person name="Carpenter L."/>
            <person name="White O."/>
            <person name="Peterson J.D."/>
            <person name="DeBoy R.T."/>
            <person name="Dodson R.J."/>
            <person name="Gwinn M.L."/>
            <person name="Haft D.H."/>
            <person name="Hickey E.K."/>
            <person name="Kolonay J.F."/>
            <person name="Nelson W.C."/>
            <person name="Umayam L.A."/>
            <person name="Ermolaeva M.D."/>
            <person name="Salzberg S.L."/>
            <person name="Delcher A."/>
            <person name="Utterback T.R."/>
            <person name="Weidman J.F."/>
            <person name="Khouri H.M."/>
            <person name="Gill J."/>
            <person name="Mikula A."/>
            <person name="Bishai W."/>
            <person name="Jacobs W.R. Jr."/>
            <person name="Venter J.C."/>
            <person name="Fraser C.M."/>
        </authorList>
    </citation>
    <scope>NUCLEOTIDE SEQUENCE [LARGE SCALE GENOMIC DNA]</scope>
    <source>
        <strain>CDC 1551 / Oshkosh</strain>
    </source>
</reference>
<feature type="chain" id="PRO_0000428098" description="Uncharacterized PPE family protein PPE45">
    <location>
        <begin position="1"/>
        <end position="408"/>
    </location>
</feature>
<feature type="transmembrane region" description="Helical" evidence="1">
    <location>
        <begin position="56"/>
        <end position="76"/>
    </location>
</feature>
<dbReference type="EMBL" id="AE000516">
    <property type="protein sequence ID" value="AAK47285.1"/>
    <property type="molecule type" value="Genomic_DNA"/>
</dbReference>
<dbReference type="PIR" id="G70925">
    <property type="entry name" value="G70925"/>
</dbReference>
<dbReference type="RefSeq" id="WP_003414680.1">
    <property type="nucleotide sequence ID" value="NZ_KK341227.1"/>
</dbReference>
<dbReference type="SMR" id="P9WHZ0"/>
<dbReference type="KEGG" id="mtc:MT2959"/>
<dbReference type="PATRIC" id="fig|83331.31.peg.3198"/>
<dbReference type="HOGENOM" id="CLU_000243_0_2_11"/>
<dbReference type="Proteomes" id="UP000001020">
    <property type="component" value="Chromosome"/>
</dbReference>
<dbReference type="GO" id="GO:0005886">
    <property type="term" value="C:plasma membrane"/>
    <property type="evidence" value="ECO:0007669"/>
    <property type="project" value="UniProtKB-SubCell"/>
</dbReference>
<dbReference type="GO" id="GO:0052572">
    <property type="term" value="P:response to host immune response"/>
    <property type="evidence" value="ECO:0007669"/>
    <property type="project" value="TreeGrafter"/>
</dbReference>
<dbReference type="FunFam" id="1.20.1260.20:FF:000001">
    <property type="entry name" value="PPE family protein PPE41"/>
    <property type="match status" value="1"/>
</dbReference>
<dbReference type="Gene3D" id="1.20.1260.20">
    <property type="entry name" value="PPE superfamily"/>
    <property type="match status" value="1"/>
</dbReference>
<dbReference type="InterPro" id="IPR022171">
    <property type="entry name" value="PPE_C"/>
</dbReference>
<dbReference type="InterPro" id="IPR000030">
    <property type="entry name" value="PPE_dom"/>
</dbReference>
<dbReference type="InterPro" id="IPR038332">
    <property type="entry name" value="PPE_sf"/>
</dbReference>
<dbReference type="PANTHER" id="PTHR46766">
    <property type="entry name" value="GLUTAMINE-RICH PROTEIN 2"/>
    <property type="match status" value="1"/>
</dbReference>
<dbReference type="PANTHER" id="PTHR46766:SF1">
    <property type="entry name" value="GLUTAMINE-RICH PROTEIN 2"/>
    <property type="match status" value="1"/>
</dbReference>
<dbReference type="Pfam" id="PF00823">
    <property type="entry name" value="PPE"/>
    <property type="match status" value="1"/>
</dbReference>
<dbReference type="Pfam" id="PF12484">
    <property type="entry name" value="PPE-SVP"/>
    <property type="match status" value="1"/>
</dbReference>
<dbReference type="SUPFAM" id="SSF140459">
    <property type="entry name" value="PE/PPE dimer-like"/>
    <property type="match status" value="1"/>
</dbReference>
<gene>
    <name type="primary">PPE45</name>
    <name type="ordered locus">MT2959</name>
</gene>
<accession>P9WHZ0</accession>
<accession>L0TCJ6</accession>
<accession>P0A694</accession>
<accession>Q10813</accession>
<evidence type="ECO:0000255" key="1"/>
<evidence type="ECO:0000305" key="2"/>
<keyword id="KW-1003">Cell membrane</keyword>
<keyword id="KW-0472">Membrane</keyword>
<keyword id="KW-1185">Reference proteome</keyword>
<keyword id="KW-0812">Transmembrane</keyword>
<keyword id="KW-1133">Transmembrane helix</keyword>
<protein>
    <recommendedName>
        <fullName>Uncharacterized PPE family protein PPE45</fullName>
    </recommendedName>
</protein>